<protein>
    <recommendedName>
        <fullName>ATP-dependent RNA helicase DED1</fullName>
        <ecNumber>3.6.4.13</ecNumber>
    </recommendedName>
</protein>
<evidence type="ECO:0000250" key="1"/>
<evidence type="ECO:0000255" key="2">
    <source>
        <dbReference type="PROSITE-ProRule" id="PRU00541"/>
    </source>
</evidence>
<evidence type="ECO:0000255" key="3">
    <source>
        <dbReference type="PROSITE-ProRule" id="PRU00542"/>
    </source>
</evidence>
<evidence type="ECO:0000256" key="4">
    <source>
        <dbReference type="SAM" id="MobiDB-lite"/>
    </source>
</evidence>
<evidence type="ECO:0000305" key="5"/>
<keyword id="KW-0067">ATP-binding</keyword>
<keyword id="KW-0963">Cytoplasm</keyword>
<keyword id="KW-0347">Helicase</keyword>
<keyword id="KW-0378">Hydrolase</keyword>
<keyword id="KW-0396">Initiation factor</keyword>
<keyword id="KW-0547">Nucleotide-binding</keyword>
<keyword id="KW-0648">Protein biosynthesis</keyword>
<keyword id="KW-1185">Reference proteome</keyword>
<keyword id="KW-0694">RNA-binding</keyword>
<gene>
    <name type="primary">DED1</name>
    <name type="ORF">CIMG_09563</name>
</gene>
<organism>
    <name type="scientific">Coccidioides immitis (strain RS)</name>
    <name type="common">Valley fever fungus</name>
    <dbReference type="NCBI Taxonomy" id="246410"/>
    <lineage>
        <taxon>Eukaryota</taxon>
        <taxon>Fungi</taxon>
        <taxon>Dikarya</taxon>
        <taxon>Ascomycota</taxon>
        <taxon>Pezizomycotina</taxon>
        <taxon>Eurotiomycetes</taxon>
        <taxon>Eurotiomycetidae</taxon>
        <taxon>Onygenales</taxon>
        <taxon>Onygenaceae</taxon>
        <taxon>Coccidioides</taxon>
    </lineage>
</organism>
<comment type="function">
    <text evidence="1">ATP-binding RNA helicase involved in translation initiation. Remodels RNA in response to ADP and ATP concentrations by facilitating disruption, but also formation of RNA duplexes (By similarity).</text>
</comment>
<comment type="catalytic activity">
    <reaction>
        <text>ATP + H2O = ADP + phosphate + H(+)</text>
        <dbReference type="Rhea" id="RHEA:13065"/>
        <dbReference type="ChEBI" id="CHEBI:15377"/>
        <dbReference type="ChEBI" id="CHEBI:15378"/>
        <dbReference type="ChEBI" id="CHEBI:30616"/>
        <dbReference type="ChEBI" id="CHEBI:43474"/>
        <dbReference type="ChEBI" id="CHEBI:456216"/>
        <dbReference type="EC" id="3.6.4.13"/>
    </reaction>
</comment>
<comment type="subcellular location">
    <subcellularLocation>
        <location evidence="1">Cytoplasm</location>
    </subcellularLocation>
</comment>
<comment type="domain">
    <text>The Q motif is unique to and characteristic of the DEAD box family of RNA helicases and controls ATP binding and hydrolysis.</text>
</comment>
<comment type="similarity">
    <text evidence="5">Belongs to the DEAD box helicase family. DDX3/DED1 subfamily.</text>
</comment>
<feature type="chain" id="PRO_0000255986" description="ATP-dependent RNA helicase DED1">
    <location>
        <begin position="1"/>
        <end position="665"/>
    </location>
</feature>
<feature type="domain" description="Helicase ATP-binding" evidence="2">
    <location>
        <begin position="212"/>
        <end position="405"/>
    </location>
</feature>
<feature type="domain" description="Helicase C-terminal" evidence="3">
    <location>
        <begin position="416"/>
        <end position="576"/>
    </location>
</feature>
<feature type="region of interest" description="Disordered" evidence="4">
    <location>
        <begin position="1"/>
        <end position="144"/>
    </location>
</feature>
<feature type="region of interest" description="Disordered" evidence="4">
    <location>
        <begin position="579"/>
        <end position="617"/>
    </location>
</feature>
<feature type="region of interest" description="Disordered" evidence="4">
    <location>
        <begin position="645"/>
        <end position="665"/>
    </location>
</feature>
<feature type="short sequence motif" description="Q motif">
    <location>
        <begin position="181"/>
        <end position="209"/>
    </location>
</feature>
<feature type="short sequence motif" description="DEAD box">
    <location>
        <begin position="349"/>
        <end position="352"/>
    </location>
</feature>
<feature type="compositionally biased region" description="Low complexity" evidence="4">
    <location>
        <begin position="58"/>
        <end position="86"/>
    </location>
</feature>
<feature type="compositionally biased region" description="Gly residues" evidence="4">
    <location>
        <begin position="106"/>
        <end position="124"/>
    </location>
</feature>
<feature type="compositionally biased region" description="Gly residues" evidence="4">
    <location>
        <begin position="580"/>
        <end position="595"/>
    </location>
</feature>
<feature type="compositionally biased region" description="Low complexity" evidence="4">
    <location>
        <begin position="653"/>
        <end position="665"/>
    </location>
</feature>
<feature type="binding site" evidence="2">
    <location>
        <begin position="225"/>
        <end position="232"/>
    </location>
    <ligand>
        <name>ATP</name>
        <dbReference type="ChEBI" id="CHEBI:30616"/>
    </ligand>
</feature>
<accession>Q1DJF0</accession>
<accession>A0A0D6K9M7</accession>
<accession>J3K0D9</accession>
<proteinExistence type="inferred from homology"/>
<dbReference type="EC" id="3.6.4.13"/>
<dbReference type="EMBL" id="GG704915">
    <property type="protein sequence ID" value="EAS28359.2"/>
    <property type="molecule type" value="Genomic_DNA"/>
</dbReference>
<dbReference type="RefSeq" id="XP_001239942.2">
    <property type="nucleotide sequence ID" value="XM_001239941.2"/>
</dbReference>
<dbReference type="SMR" id="Q1DJF0"/>
<dbReference type="FunCoup" id="Q1DJF0">
    <property type="interactions" value="1230"/>
</dbReference>
<dbReference type="STRING" id="246410.Q1DJF0"/>
<dbReference type="GeneID" id="4558926"/>
<dbReference type="KEGG" id="cim:CIMG_09563"/>
<dbReference type="VEuPathDB" id="FungiDB:CIMG_09563"/>
<dbReference type="InParanoid" id="Q1DJF0"/>
<dbReference type="OMA" id="CYRSWVR"/>
<dbReference type="OrthoDB" id="196131at2759"/>
<dbReference type="Proteomes" id="UP000001261">
    <property type="component" value="Unassembled WGS sequence"/>
</dbReference>
<dbReference type="GO" id="GO:0005737">
    <property type="term" value="C:cytoplasm"/>
    <property type="evidence" value="ECO:0007669"/>
    <property type="project" value="UniProtKB-SubCell"/>
</dbReference>
<dbReference type="GO" id="GO:0005524">
    <property type="term" value="F:ATP binding"/>
    <property type="evidence" value="ECO:0007669"/>
    <property type="project" value="UniProtKB-KW"/>
</dbReference>
<dbReference type="GO" id="GO:0016887">
    <property type="term" value="F:ATP hydrolysis activity"/>
    <property type="evidence" value="ECO:0007669"/>
    <property type="project" value="RHEA"/>
</dbReference>
<dbReference type="GO" id="GO:0003723">
    <property type="term" value="F:RNA binding"/>
    <property type="evidence" value="ECO:0007669"/>
    <property type="project" value="UniProtKB-KW"/>
</dbReference>
<dbReference type="GO" id="GO:0003724">
    <property type="term" value="F:RNA helicase activity"/>
    <property type="evidence" value="ECO:0007669"/>
    <property type="project" value="UniProtKB-EC"/>
</dbReference>
<dbReference type="GO" id="GO:0003743">
    <property type="term" value="F:translation initiation factor activity"/>
    <property type="evidence" value="ECO:0007669"/>
    <property type="project" value="UniProtKB-KW"/>
</dbReference>
<dbReference type="CDD" id="cd17967">
    <property type="entry name" value="DEADc_DDX3_DDX4"/>
    <property type="match status" value="1"/>
</dbReference>
<dbReference type="CDD" id="cd18787">
    <property type="entry name" value="SF2_C_DEAD"/>
    <property type="match status" value="1"/>
</dbReference>
<dbReference type="FunFam" id="3.40.50.300:FF:000160">
    <property type="entry name" value="ATP-dependent RNA helicase DDX3X"/>
    <property type="match status" value="1"/>
</dbReference>
<dbReference type="FunFam" id="3.40.50.300:FF:000008">
    <property type="entry name" value="ATP-dependent RNA helicase RhlB"/>
    <property type="match status" value="1"/>
</dbReference>
<dbReference type="Gene3D" id="3.40.50.300">
    <property type="entry name" value="P-loop containing nucleotide triphosphate hydrolases"/>
    <property type="match status" value="2"/>
</dbReference>
<dbReference type="InterPro" id="IPR011545">
    <property type="entry name" value="DEAD/DEAH_box_helicase_dom"/>
</dbReference>
<dbReference type="InterPro" id="IPR044763">
    <property type="entry name" value="Ded1/Dbp1_DEADc"/>
</dbReference>
<dbReference type="InterPro" id="IPR014001">
    <property type="entry name" value="Helicase_ATP-bd"/>
</dbReference>
<dbReference type="InterPro" id="IPR001650">
    <property type="entry name" value="Helicase_C-like"/>
</dbReference>
<dbReference type="InterPro" id="IPR027417">
    <property type="entry name" value="P-loop_NTPase"/>
</dbReference>
<dbReference type="InterPro" id="IPR000629">
    <property type="entry name" value="RNA-helicase_DEAD-box_CS"/>
</dbReference>
<dbReference type="InterPro" id="IPR014014">
    <property type="entry name" value="RNA_helicase_DEAD_Q_motif"/>
</dbReference>
<dbReference type="PANTHER" id="PTHR47958">
    <property type="entry name" value="ATP-DEPENDENT RNA HELICASE DBP3"/>
    <property type="match status" value="1"/>
</dbReference>
<dbReference type="Pfam" id="PF00270">
    <property type="entry name" value="DEAD"/>
    <property type="match status" value="1"/>
</dbReference>
<dbReference type="Pfam" id="PF00271">
    <property type="entry name" value="Helicase_C"/>
    <property type="match status" value="1"/>
</dbReference>
<dbReference type="SMART" id="SM00487">
    <property type="entry name" value="DEXDc"/>
    <property type="match status" value="1"/>
</dbReference>
<dbReference type="SMART" id="SM00490">
    <property type="entry name" value="HELICc"/>
    <property type="match status" value="1"/>
</dbReference>
<dbReference type="SUPFAM" id="SSF52540">
    <property type="entry name" value="P-loop containing nucleoside triphosphate hydrolases"/>
    <property type="match status" value="1"/>
</dbReference>
<dbReference type="PROSITE" id="PS00039">
    <property type="entry name" value="DEAD_ATP_HELICASE"/>
    <property type="match status" value="1"/>
</dbReference>
<dbReference type="PROSITE" id="PS51192">
    <property type="entry name" value="HELICASE_ATP_BIND_1"/>
    <property type="match status" value="1"/>
</dbReference>
<dbReference type="PROSITE" id="PS51194">
    <property type="entry name" value="HELICASE_CTER"/>
    <property type="match status" value="1"/>
</dbReference>
<dbReference type="PROSITE" id="PS51195">
    <property type="entry name" value="Q_MOTIF"/>
    <property type="match status" value="1"/>
</dbReference>
<reference key="1">
    <citation type="journal article" date="2009" name="Genome Res.">
        <title>Comparative genomic analyses of the human fungal pathogens Coccidioides and their relatives.</title>
        <authorList>
            <person name="Sharpton T.J."/>
            <person name="Stajich J.E."/>
            <person name="Rounsley S.D."/>
            <person name="Gardner M.J."/>
            <person name="Wortman J.R."/>
            <person name="Jordar V.S."/>
            <person name="Maiti R."/>
            <person name="Kodira C.D."/>
            <person name="Neafsey D.E."/>
            <person name="Zeng Q."/>
            <person name="Hung C.-Y."/>
            <person name="McMahan C."/>
            <person name="Muszewska A."/>
            <person name="Grynberg M."/>
            <person name="Mandel M.A."/>
            <person name="Kellner E.M."/>
            <person name="Barker B.M."/>
            <person name="Galgiani J.N."/>
            <person name="Orbach M.J."/>
            <person name="Kirkland T.N."/>
            <person name="Cole G.T."/>
            <person name="Henn M.R."/>
            <person name="Birren B.W."/>
            <person name="Taylor J.W."/>
        </authorList>
    </citation>
    <scope>NUCLEOTIDE SEQUENCE [LARGE SCALE GENOMIC DNA]</scope>
    <source>
        <strain>RS</strain>
    </source>
</reference>
<reference key="2">
    <citation type="journal article" date="2010" name="Genome Res.">
        <title>Population genomic sequencing of Coccidioides fungi reveals recent hybridization and transposon control.</title>
        <authorList>
            <person name="Neafsey D.E."/>
            <person name="Barker B.M."/>
            <person name="Sharpton T.J."/>
            <person name="Stajich J.E."/>
            <person name="Park D.J."/>
            <person name="Whiston E."/>
            <person name="Hung C.-Y."/>
            <person name="McMahan C."/>
            <person name="White J."/>
            <person name="Sykes S."/>
            <person name="Heiman D."/>
            <person name="Young S."/>
            <person name="Zeng Q."/>
            <person name="Abouelleil A."/>
            <person name="Aftuck L."/>
            <person name="Bessette D."/>
            <person name="Brown A."/>
            <person name="FitzGerald M."/>
            <person name="Lui A."/>
            <person name="Macdonald J.P."/>
            <person name="Priest M."/>
            <person name="Orbach M.J."/>
            <person name="Galgiani J.N."/>
            <person name="Kirkland T.N."/>
            <person name="Cole G.T."/>
            <person name="Birren B.W."/>
            <person name="Henn M.R."/>
            <person name="Taylor J.W."/>
            <person name="Rounsley S.D."/>
        </authorList>
    </citation>
    <scope>GENOME REANNOTATION</scope>
    <source>
        <strain>RS</strain>
    </source>
</reference>
<name>DED1_COCIM</name>
<sequence length="665" mass="71139">MADSLKMAGLSLEDSQHAPSHATGRAPYIPPHLRGQQRAGPTMPVDGAAPQGRPPMNPGSWGPNGAPPNNWAPRGANNINGAPAWGAAGGGGARFDPNAYGHPGHRGGQSHGGAGSGAARGSGDGQWRDGKHIPGPPNARLERELFGVPNDPSKQHTGINFANYDDIPVEASGHDVPEPVTTFTNPPLDDHLISNIKLATYKTPTPVQKYSIPIVMGGRDLMACAQTGSGKTGGFLFPILSQAFKNGPSAVPTQNANQFSYGRQRKAYPTSLILAPTRELVSQIYDEARKFAYRSWVRPCVVYGGADIGSQLRQIERGCDLLVATPGRLVDLIERGRISLCNIKYLVLDEADRMLDMGFEPQIRRIVEGEDMPPVNGRQTLMFSATFPRDIQMLARDFLKDYVFLSVGRVGSTSENITQKVEYVEDADKRSVLLDILHTHGTGLTLIFVETKRMADSLSEFLINQNFPATAIHGDRTQRERERALEYFRNGRCPILVATAVAARGLDIPNVTHVVNYDLPTDIDDYVHRIGRTGRAGNTGLSTAFFNRGNRGVVRDLIELLKEAHQEVPAFLENIAREGSGYGGRGGGRGGGRGRGANATRDMRRMGGGGPPMSGTPSYSGGYGGGANNYGGSYSSAPSYGGYGGGYGGGSYGNPSGPTGPSSWW</sequence>